<dbReference type="EMBL" id="U47104">
    <property type="protein sequence ID" value="AAC52629.1"/>
    <property type="molecule type" value="mRNA"/>
</dbReference>
<dbReference type="EMBL" id="AK141522">
    <property type="protein sequence ID" value="BAE24717.1"/>
    <property type="molecule type" value="mRNA"/>
</dbReference>
<dbReference type="EMBL" id="AL049866">
    <property type="protein sequence ID" value="CAB88276.1"/>
    <property type="molecule type" value="Genomic_DNA"/>
</dbReference>
<dbReference type="EMBL" id="AL732461">
    <property type="status" value="NOT_ANNOTATED_CDS"/>
    <property type="molecule type" value="Genomic_DNA"/>
</dbReference>
<dbReference type="EMBL" id="CH466650">
    <property type="protein sequence ID" value="EDL29901.1"/>
    <property type="molecule type" value="Genomic_DNA"/>
</dbReference>
<dbReference type="CCDS" id="CCDS30200.1"/>
<dbReference type="RefSeq" id="NP_033592.2">
    <property type="nucleotide sequence ID" value="NM_009566.5"/>
</dbReference>
<dbReference type="RefSeq" id="XP_006528027.1">
    <property type="nucleotide sequence ID" value="XM_006527964.4"/>
</dbReference>
<dbReference type="SMR" id="Q62396"/>
<dbReference type="BioGRID" id="204681">
    <property type="interactions" value="25"/>
</dbReference>
<dbReference type="STRING" id="10090.ENSMUSP00000033740"/>
<dbReference type="iPTMnet" id="Q62396"/>
<dbReference type="PhosphoSitePlus" id="Q62396"/>
<dbReference type="PaxDb" id="10090-ENSMUSP00000033740"/>
<dbReference type="ProteomicsDB" id="299551"/>
<dbReference type="Antibodypedia" id="63851">
    <property type="antibodies" value="33 antibodies from 12 providers"/>
</dbReference>
<dbReference type="DNASU" id="22754"/>
<dbReference type="Ensembl" id="ENSMUST00000033740.12">
    <property type="protein sequence ID" value="ENSMUSP00000033740.6"/>
    <property type="gene ID" value="ENSMUSG00000031374.14"/>
</dbReference>
<dbReference type="GeneID" id="22754"/>
<dbReference type="KEGG" id="mmu:22754"/>
<dbReference type="UCSC" id="uc009tlr.1">
    <property type="organism name" value="mouse"/>
</dbReference>
<dbReference type="AGR" id="MGI:108094"/>
<dbReference type="CTD" id="139735"/>
<dbReference type="MGI" id="MGI:108094">
    <property type="gene designation" value="Zfp92"/>
</dbReference>
<dbReference type="VEuPathDB" id="HostDB:ENSMUSG00000031374"/>
<dbReference type="eggNOG" id="KOG1721">
    <property type="taxonomic scope" value="Eukaryota"/>
</dbReference>
<dbReference type="GeneTree" id="ENSGT00940000162887"/>
<dbReference type="HOGENOM" id="CLU_002678_57_1_1"/>
<dbReference type="InParanoid" id="Q62396"/>
<dbReference type="OMA" id="PQVCERC"/>
<dbReference type="OrthoDB" id="6077919at2759"/>
<dbReference type="PhylomeDB" id="Q62396"/>
<dbReference type="TreeFam" id="TF337732"/>
<dbReference type="BioGRID-ORCS" id="22754">
    <property type="hits" value="2 hits in 78 CRISPR screens"/>
</dbReference>
<dbReference type="PRO" id="PR:Q62396"/>
<dbReference type="Proteomes" id="UP000000589">
    <property type="component" value="Chromosome X"/>
</dbReference>
<dbReference type="RNAct" id="Q62396">
    <property type="molecule type" value="protein"/>
</dbReference>
<dbReference type="Bgee" id="ENSMUSG00000031374">
    <property type="expression patterns" value="Expressed in animal zygote and 47 other cell types or tissues"/>
</dbReference>
<dbReference type="ExpressionAtlas" id="Q62396">
    <property type="expression patterns" value="baseline and differential"/>
</dbReference>
<dbReference type="GO" id="GO:0005634">
    <property type="term" value="C:nucleus"/>
    <property type="evidence" value="ECO:0007669"/>
    <property type="project" value="UniProtKB-SubCell"/>
</dbReference>
<dbReference type="GO" id="GO:0003677">
    <property type="term" value="F:DNA binding"/>
    <property type="evidence" value="ECO:0007669"/>
    <property type="project" value="UniProtKB-KW"/>
</dbReference>
<dbReference type="GO" id="GO:0008270">
    <property type="term" value="F:zinc ion binding"/>
    <property type="evidence" value="ECO:0007669"/>
    <property type="project" value="UniProtKB-KW"/>
</dbReference>
<dbReference type="GO" id="GO:0006355">
    <property type="term" value="P:regulation of DNA-templated transcription"/>
    <property type="evidence" value="ECO:0007669"/>
    <property type="project" value="InterPro"/>
</dbReference>
<dbReference type="CDD" id="cd07765">
    <property type="entry name" value="KRAB_A-box"/>
    <property type="match status" value="1"/>
</dbReference>
<dbReference type="FunFam" id="3.30.160.60:FF:000424">
    <property type="entry name" value="Zinc finger protein 140"/>
    <property type="match status" value="1"/>
</dbReference>
<dbReference type="FunFam" id="3.30.160.60:FF:001498">
    <property type="entry name" value="Zinc finger protein 404"/>
    <property type="match status" value="1"/>
</dbReference>
<dbReference type="FunFam" id="3.30.160.60:FF:000384">
    <property type="entry name" value="Zinc finger protein 550"/>
    <property type="match status" value="2"/>
</dbReference>
<dbReference type="FunFam" id="3.30.160.60:FF:000953">
    <property type="entry name" value="Zinc finger protein 691"/>
    <property type="match status" value="1"/>
</dbReference>
<dbReference type="FunFam" id="3.30.160.60:FF:001111">
    <property type="entry name" value="Zinc finger protein 92 homolog"/>
    <property type="match status" value="1"/>
</dbReference>
<dbReference type="FunFam" id="3.30.160.60:FF:001671">
    <property type="entry name" value="Zinc finger protein 94"/>
    <property type="match status" value="1"/>
</dbReference>
<dbReference type="FunFam" id="3.30.160.60:FF:000330">
    <property type="entry name" value="Zinc finger with KRAB and SCAN domains 1"/>
    <property type="match status" value="1"/>
</dbReference>
<dbReference type="Gene3D" id="6.10.140.140">
    <property type="match status" value="1"/>
</dbReference>
<dbReference type="Gene3D" id="3.30.160.60">
    <property type="entry name" value="Classic Zinc Finger"/>
    <property type="match status" value="9"/>
</dbReference>
<dbReference type="InterPro" id="IPR001909">
    <property type="entry name" value="KRAB"/>
</dbReference>
<dbReference type="InterPro" id="IPR036051">
    <property type="entry name" value="KRAB_dom_sf"/>
</dbReference>
<dbReference type="InterPro" id="IPR036236">
    <property type="entry name" value="Znf_C2H2_sf"/>
</dbReference>
<dbReference type="InterPro" id="IPR013087">
    <property type="entry name" value="Znf_C2H2_type"/>
</dbReference>
<dbReference type="PANTHER" id="PTHR24393">
    <property type="entry name" value="ZINC FINGER PROTEIN"/>
    <property type="match status" value="1"/>
</dbReference>
<dbReference type="PANTHER" id="PTHR24393:SF100">
    <property type="entry name" value="ZINC FINGER PROTEIN-RELATED"/>
    <property type="match status" value="1"/>
</dbReference>
<dbReference type="Pfam" id="PF01352">
    <property type="entry name" value="KRAB"/>
    <property type="match status" value="1"/>
</dbReference>
<dbReference type="Pfam" id="PF00096">
    <property type="entry name" value="zf-C2H2"/>
    <property type="match status" value="8"/>
</dbReference>
<dbReference type="SMART" id="SM00349">
    <property type="entry name" value="KRAB"/>
    <property type="match status" value="1"/>
</dbReference>
<dbReference type="SMART" id="SM00355">
    <property type="entry name" value="ZnF_C2H2"/>
    <property type="match status" value="9"/>
</dbReference>
<dbReference type="SUPFAM" id="SSF57667">
    <property type="entry name" value="beta-beta-alpha zinc fingers"/>
    <property type="match status" value="6"/>
</dbReference>
<dbReference type="SUPFAM" id="SSF109640">
    <property type="entry name" value="KRAB domain (Kruppel-associated box)"/>
    <property type="match status" value="1"/>
</dbReference>
<dbReference type="PROSITE" id="PS50805">
    <property type="entry name" value="KRAB"/>
    <property type="match status" value="1"/>
</dbReference>
<dbReference type="PROSITE" id="PS00028">
    <property type="entry name" value="ZINC_FINGER_C2H2_1"/>
    <property type="match status" value="8"/>
</dbReference>
<dbReference type="PROSITE" id="PS50157">
    <property type="entry name" value="ZINC_FINGER_C2H2_2"/>
    <property type="match status" value="9"/>
</dbReference>
<accession>Q62396</accession>
<accession>Q9JJR0</accession>
<name>ZFP92_MOUSE</name>
<gene>
    <name type="primary">Zfp92</name>
</gene>
<comment type="function">
    <text evidence="4">KRAB domain-containing zinc-finger protein that represses B1/Alu SINE transposable elements and modulates the transcription of nearby genes in a tissue-specific manner. It regulates glucose homeostasis and lipid metabolism by modulating the expression of the endocrine cell-defining transcription factor, MAFB, in pancreatic islets and, the fat metabolism regulator, ACACB, in adipose tissue and muscle.</text>
</comment>
<comment type="subcellular location">
    <subcellularLocation>
        <location evidence="4">Nucleus</location>
    </subcellularLocation>
</comment>
<comment type="tissue specificity">
    <text evidence="4">Highly expressed in pancreatic islets.</text>
</comment>
<comment type="disruption phenotype">
    <text evidence="4">Mutants are viable, fertile and do not demonstrate any gross abnormalities (PubMed:37155670). Males have lower body weight than their wild type counterparts beginning from 6 months of age with a slight decrease in fasting blood glucose. Male mutants have altered body composition and elevated fasting blood glucose on a high fat diet (PubMed:37155670).</text>
</comment>
<comment type="similarity">
    <text evidence="5">Belongs to the krueppel C2H2-type zinc-finger protein family.</text>
</comment>
<organism>
    <name type="scientific">Mus musculus</name>
    <name type="common">Mouse</name>
    <dbReference type="NCBI Taxonomy" id="10090"/>
    <lineage>
        <taxon>Eukaryota</taxon>
        <taxon>Metazoa</taxon>
        <taxon>Chordata</taxon>
        <taxon>Craniata</taxon>
        <taxon>Vertebrata</taxon>
        <taxon>Euteleostomi</taxon>
        <taxon>Mammalia</taxon>
        <taxon>Eutheria</taxon>
        <taxon>Euarchontoglires</taxon>
        <taxon>Glires</taxon>
        <taxon>Rodentia</taxon>
        <taxon>Myomorpha</taxon>
        <taxon>Muroidea</taxon>
        <taxon>Muridae</taxon>
        <taxon>Murinae</taxon>
        <taxon>Mus</taxon>
        <taxon>Mus</taxon>
    </lineage>
</organism>
<feature type="chain" id="PRO_0000047314" description="Zinc finger protein 92">
    <location>
        <begin position="1"/>
        <end position="488"/>
    </location>
</feature>
<feature type="domain" description="KRAB" evidence="2">
    <location>
        <begin position="14"/>
        <end position="85"/>
    </location>
</feature>
<feature type="zinc finger region" description="C2H2-type 1" evidence="1">
    <location>
        <begin position="141"/>
        <end position="163"/>
    </location>
</feature>
<feature type="zinc finger region" description="C2H2-type 2" evidence="1">
    <location>
        <begin position="169"/>
        <end position="191"/>
    </location>
</feature>
<feature type="zinc finger region" description="C2H2-type 3" evidence="1">
    <location>
        <begin position="197"/>
        <end position="219"/>
    </location>
</feature>
<feature type="zinc finger region" description="C2H2-type 4" evidence="1">
    <location>
        <begin position="225"/>
        <end position="247"/>
    </location>
</feature>
<feature type="zinc finger region" description="C2H2-type 5" evidence="1">
    <location>
        <begin position="253"/>
        <end position="275"/>
    </location>
</feature>
<feature type="zinc finger region" description="C2H2-type 6" evidence="1">
    <location>
        <begin position="281"/>
        <end position="303"/>
    </location>
</feature>
<feature type="zinc finger region" description="C2H2-type 7; degenerate" evidence="1">
    <location>
        <begin position="309"/>
        <end position="331"/>
    </location>
</feature>
<feature type="zinc finger region" description="C2H2-type 8" evidence="1">
    <location>
        <begin position="337"/>
        <end position="359"/>
    </location>
</feature>
<feature type="zinc finger region" description="C2H2-type 9" evidence="1">
    <location>
        <begin position="410"/>
        <end position="432"/>
    </location>
</feature>
<feature type="region of interest" description="Disordered" evidence="3">
    <location>
        <begin position="387"/>
        <end position="408"/>
    </location>
</feature>
<feature type="region of interest" description="Disordered" evidence="3">
    <location>
        <begin position="435"/>
        <end position="488"/>
    </location>
</feature>
<feature type="sequence conflict" description="In Ref. 1; AAC52629." evidence="5" ref="1">
    <original>L</original>
    <variation>V</variation>
    <location>
        <position position="296"/>
    </location>
</feature>
<protein>
    <recommendedName>
        <fullName>Zinc finger protein 92</fullName>
        <shortName>Zfp-92</shortName>
    </recommendedName>
</protein>
<sequence>MAATLLRAKPKVTVSFEDVSVYFTKTEWRLLDLKQRTLYKQVMLENYSHLVSVGFAFSKPNLVSQLERGEKPWIRDDGMESAARSCAGNRIKTKTLTSKPKLFGRGLLRNTSRSSLQRRPHDFRPNPIVRYQHSRIADKRYLCQQCGKSFSRSFNLIKHRIIHSREKPYECSECGKQFQRSLALLEHQRIHSGDKPYECGECGKTFTRSSNLVKHQVIHSSEMPFVCRMCGKVFRRSFALLEHTRIHSGERPFECTECGKAFSRSSNLIEHQRIHSGQKPYICKECGKAFKGVSQLIHHQLIHRGDKPFTCHEYGKAFRGLSGLSQHQRVHRGEKPYECSECGRAFGRRANLFKHQVVHGGVRLQHRTRGKGFQRKLLEHLRDLHGQQPQEAGEGSSAEPQPIDTNEKPQVCERCGQVFENKLLLCRHLRIHDDEDDKKQKPVISSTSVLEDKSLLSQHLEAQPTEESDSEGSVVFVYAEKPHGPSSP</sequence>
<reference key="1">
    <citation type="journal article" date="1996" name="Genome Res.">
        <title>A comparative transcription map of the murine bare patches (Bpa) and striated (Str) critical regions and human Xq28.</title>
        <authorList>
            <person name="Levin M.L."/>
            <person name="Chatterjee A."/>
            <person name="Pragliola A."/>
            <person name="Worley K.C."/>
            <person name="Wehnert M."/>
            <person name="Zhuchenko O."/>
            <person name="Smith R.F."/>
            <person name="Lee C.C."/>
            <person name="Herman G.E."/>
        </authorList>
    </citation>
    <scope>NUCLEOTIDE SEQUENCE [MRNA]</scope>
    <source>
        <tissue>Embryo</tissue>
    </source>
</reference>
<reference key="2">
    <citation type="journal article" date="2005" name="Science">
        <title>The transcriptional landscape of the mammalian genome.</title>
        <authorList>
            <person name="Carninci P."/>
            <person name="Kasukawa T."/>
            <person name="Katayama S."/>
            <person name="Gough J."/>
            <person name="Frith M.C."/>
            <person name="Maeda N."/>
            <person name="Oyama R."/>
            <person name="Ravasi T."/>
            <person name="Lenhard B."/>
            <person name="Wells C."/>
            <person name="Kodzius R."/>
            <person name="Shimokawa K."/>
            <person name="Bajic V.B."/>
            <person name="Brenner S.E."/>
            <person name="Batalov S."/>
            <person name="Forrest A.R."/>
            <person name="Zavolan M."/>
            <person name="Davis M.J."/>
            <person name="Wilming L.G."/>
            <person name="Aidinis V."/>
            <person name="Allen J.E."/>
            <person name="Ambesi-Impiombato A."/>
            <person name="Apweiler R."/>
            <person name="Aturaliya R.N."/>
            <person name="Bailey T.L."/>
            <person name="Bansal M."/>
            <person name="Baxter L."/>
            <person name="Beisel K.W."/>
            <person name="Bersano T."/>
            <person name="Bono H."/>
            <person name="Chalk A.M."/>
            <person name="Chiu K.P."/>
            <person name="Choudhary V."/>
            <person name="Christoffels A."/>
            <person name="Clutterbuck D.R."/>
            <person name="Crowe M.L."/>
            <person name="Dalla E."/>
            <person name="Dalrymple B.P."/>
            <person name="de Bono B."/>
            <person name="Della Gatta G."/>
            <person name="di Bernardo D."/>
            <person name="Down T."/>
            <person name="Engstrom P."/>
            <person name="Fagiolini M."/>
            <person name="Faulkner G."/>
            <person name="Fletcher C.F."/>
            <person name="Fukushima T."/>
            <person name="Furuno M."/>
            <person name="Futaki S."/>
            <person name="Gariboldi M."/>
            <person name="Georgii-Hemming P."/>
            <person name="Gingeras T.R."/>
            <person name="Gojobori T."/>
            <person name="Green R.E."/>
            <person name="Gustincich S."/>
            <person name="Harbers M."/>
            <person name="Hayashi Y."/>
            <person name="Hensch T.K."/>
            <person name="Hirokawa N."/>
            <person name="Hill D."/>
            <person name="Huminiecki L."/>
            <person name="Iacono M."/>
            <person name="Ikeo K."/>
            <person name="Iwama A."/>
            <person name="Ishikawa T."/>
            <person name="Jakt M."/>
            <person name="Kanapin A."/>
            <person name="Katoh M."/>
            <person name="Kawasawa Y."/>
            <person name="Kelso J."/>
            <person name="Kitamura H."/>
            <person name="Kitano H."/>
            <person name="Kollias G."/>
            <person name="Krishnan S.P."/>
            <person name="Kruger A."/>
            <person name="Kummerfeld S.K."/>
            <person name="Kurochkin I.V."/>
            <person name="Lareau L.F."/>
            <person name="Lazarevic D."/>
            <person name="Lipovich L."/>
            <person name="Liu J."/>
            <person name="Liuni S."/>
            <person name="McWilliam S."/>
            <person name="Madan Babu M."/>
            <person name="Madera M."/>
            <person name="Marchionni L."/>
            <person name="Matsuda H."/>
            <person name="Matsuzawa S."/>
            <person name="Miki H."/>
            <person name="Mignone F."/>
            <person name="Miyake S."/>
            <person name="Morris K."/>
            <person name="Mottagui-Tabar S."/>
            <person name="Mulder N."/>
            <person name="Nakano N."/>
            <person name="Nakauchi H."/>
            <person name="Ng P."/>
            <person name="Nilsson R."/>
            <person name="Nishiguchi S."/>
            <person name="Nishikawa S."/>
            <person name="Nori F."/>
            <person name="Ohara O."/>
            <person name="Okazaki Y."/>
            <person name="Orlando V."/>
            <person name="Pang K.C."/>
            <person name="Pavan W.J."/>
            <person name="Pavesi G."/>
            <person name="Pesole G."/>
            <person name="Petrovsky N."/>
            <person name="Piazza S."/>
            <person name="Reed J."/>
            <person name="Reid J.F."/>
            <person name="Ring B.Z."/>
            <person name="Ringwald M."/>
            <person name="Rost B."/>
            <person name="Ruan Y."/>
            <person name="Salzberg S.L."/>
            <person name="Sandelin A."/>
            <person name="Schneider C."/>
            <person name="Schoenbach C."/>
            <person name="Sekiguchi K."/>
            <person name="Semple C.A."/>
            <person name="Seno S."/>
            <person name="Sessa L."/>
            <person name="Sheng Y."/>
            <person name="Shibata Y."/>
            <person name="Shimada H."/>
            <person name="Shimada K."/>
            <person name="Silva D."/>
            <person name="Sinclair B."/>
            <person name="Sperling S."/>
            <person name="Stupka E."/>
            <person name="Sugiura K."/>
            <person name="Sultana R."/>
            <person name="Takenaka Y."/>
            <person name="Taki K."/>
            <person name="Tammoja K."/>
            <person name="Tan S.L."/>
            <person name="Tang S."/>
            <person name="Taylor M.S."/>
            <person name="Tegner J."/>
            <person name="Teichmann S.A."/>
            <person name="Ueda H.R."/>
            <person name="van Nimwegen E."/>
            <person name="Verardo R."/>
            <person name="Wei C.L."/>
            <person name="Yagi K."/>
            <person name="Yamanishi H."/>
            <person name="Zabarovsky E."/>
            <person name="Zhu S."/>
            <person name="Zimmer A."/>
            <person name="Hide W."/>
            <person name="Bult C."/>
            <person name="Grimmond S.M."/>
            <person name="Teasdale R.D."/>
            <person name="Liu E.T."/>
            <person name="Brusic V."/>
            <person name="Quackenbush J."/>
            <person name="Wahlestedt C."/>
            <person name="Mattick J.S."/>
            <person name="Hume D.A."/>
            <person name="Kai C."/>
            <person name="Sasaki D."/>
            <person name="Tomaru Y."/>
            <person name="Fukuda S."/>
            <person name="Kanamori-Katayama M."/>
            <person name="Suzuki M."/>
            <person name="Aoki J."/>
            <person name="Arakawa T."/>
            <person name="Iida J."/>
            <person name="Imamura K."/>
            <person name="Itoh M."/>
            <person name="Kato T."/>
            <person name="Kawaji H."/>
            <person name="Kawagashira N."/>
            <person name="Kawashima T."/>
            <person name="Kojima M."/>
            <person name="Kondo S."/>
            <person name="Konno H."/>
            <person name="Nakano K."/>
            <person name="Ninomiya N."/>
            <person name="Nishio T."/>
            <person name="Okada M."/>
            <person name="Plessy C."/>
            <person name="Shibata K."/>
            <person name="Shiraki T."/>
            <person name="Suzuki S."/>
            <person name="Tagami M."/>
            <person name="Waki K."/>
            <person name="Watahiki A."/>
            <person name="Okamura-Oho Y."/>
            <person name="Suzuki H."/>
            <person name="Kawai J."/>
            <person name="Hayashizaki Y."/>
        </authorList>
    </citation>
    <scope>NUCLEOTIDE SEQUENCE [LARGE SCALE MRNA]</scope>
    <source>
        <strain>129/Sv</strain>
    </source>
</reference>
<reference key="3">
    <citation type="journal article" date="2009" name="PLoS Biol.">
        <title>Lineage-specific biology revealed by a finished genome assembly of the mouse.</title>
        <authorList>
            <person name="Church D.M."/>
            <person name="Goodstadt L."/>
            <person name="Hillier L.W."/>
            <person name="Zody M.C."/>
            <person name="Goldstein S."/>
            <person name="She X."/>
            <person name="Bult C.J."/>
            <person name="Agarwala R."/>
            <person name="Cherry J.L."/>
            <person name="DiCuccio M."/>
            <person name="Hlavina W."/>
            <person name="Kapustin Y."/>
            <person name="Meric P."/>
            <person name="Maglott D."/>
            <person name="Birtle Z."/>
            <person name="Marques A.C."/>
            <person name="Graves T."/>
            <person name="Zhou S."/>
            <person name="Teague B."/>
            <person name="Potamousis K."/>
            <person name="Churas C."/>
            <person name="Place M."/>
            <person name="Herschleb J."/>
            <person name="Runnheim R."/>
            <person name="Forrest D."/>
            <person name="Amos-Landgraf J."/>
            <person name="Schwartz D.C."/>
            <person name="Cheng Z."/>
            <person name="Lindblad-Toh K."/>
            <person name="Eichler E.E."/>
            <person name="Ponting C.P."/>
        </authorList>
    </citation>
    <scope>NUCLEOTIDE SEQUENCE [LARGE SCALE GENOMIC DNA]</scope>
    <source>
        <strain>C57BL/6J</strain>
    </source>
</reference>
<reference key="4">
    <citation type="submission" date="2005-07" db="EMBL/GenBank/DDBJ databases">
        <authorList>
            <person name="Mural R.J."/>
            <person name="Adams M.D."/>
            <person name="Myers E.W."/>
            <person name="Smith H.O."/>
            <person name="Venter J.C."/>
        </authorList>
    </citation>
    <scope>NUCLEOTIDE SEQUENCE [LARGE SCALE GENOMIC DNA]</scope>
</reference>
<reference key="5">
    <citation type="journal article" date="2023" name="PLoS Genet.">
        <title>ZFP92, a KRAB domain zinc finger protein enriched in pancreatic islets, binds to B1/Alu SINE transposable elements and regulates retroelements and genes.</title>
        <authorList>
            <person name="Osipovich A.B."/>
            <person name="Dudek K.D."/>
            <person name="Trinh L.T."/>
            <person name="Kim L.H."/>
            <person name="Shrestha S."/>
            <person name="Cartailler J.P."/>
            <person name="Magnuson M.A."/>
        </authorList>
    </citation>
    <scope>FUNCTION</scope>
    <scope>DISRUPTION PHENOTYPE</scope>
    <scope>TISSUE SPECIFICITY</scope>
    <scope>SUBCELLULAR LOCATION</scope>
</reference>
<proteinExistence type="evidence at transcript level"/>
<evidence type="ECO:0000255" key="1">
    <source>
        <dbReference type="PROSITE-ProRule" id="PRU00042"/>
    </source>
</evidence>
<evidence type="ECO:0000255" key="2">
    <source>
        <dbReference type="PROSITE-ProRule" id="PRU00119"/>
    </source>
</evidence>
<evidence type="ECO:0000256" key="3">
    <source>
        <dbReference type="SAM" id="MobiDB-lite"/>
    </source>
</evidence>
<evidence type="ECO:0000269" key="4">
    <source>
    </source>
</evidence>
<evidence type="ECO:0000305" key="5"/>
<keyword id="KW-0238">DNA-binding</keyword>
<keyword id="KW-0479">Metal-binding</keyword>
<keyword id="KW-0539">Nucleus</keyword>
<keyword id="KW-1185">Reference proteome</keyword>
<keyword id="KW-0677">Repeat</keyword>
<keyword id="KW-0804">Transcription</keyword>
<keyword id="KW-0805">Transcription regulation</keyword>
<keyword id="KW-0862">Zinc</keyword>
<keyword id="KW-0863">Zinc-finger</keyword>